<accession>Q31CZ9</accession>
<sequence>MKEKIISEINLDLVFQCNDFSQFSNKLKDSKTKLIFESIFWEKVFLSWINTILKKEDYELPYYIFEKKSFSLGLQIISNQEIASLNKKWMQKNGPTDVLSFPIISDESLNNLDQIELGDIFISLEMALEQSYEYKHSIYREMIWLASHGFLHLLGWEHNNEHDLENMLNFQEYLITRLN</sequence>
<organism>
    <name type="scientific">Prochlorococcus marinus (strain MIT 9312)</name>
    <dbReference type="NCBI Taxonomy" id="74546"/>
    <lineage>
        <taxon>Bacteria</taxon>
        <taxon>Bacillati</taxon>
        <taxon>Cyanobacteriota</taxon>
        <taxon>Cyanophyceae</taxon>
        <taxon>Synechococcales</taxon>
        <taxon>Prochlorococcaceae</taxon>
        <taxon>Prochlorococcus</taxon>
    </lineage>
</organism>
<name>YBEY_PROM9</name>
<comment type="function">
    <text evidence="1">Single strand-specific metallo-endoribonuclease involved in late-stage 70S ribosome quality control and in maturation of the 3' terminus of the 16S rRNA.</text>
</comment>
<comment type="cofactor">
    <cofactor evidence="1">
        <name>Zn(2+)</name>
        <dbReference type="ChEBI" id="CHEBI:29105"/>
    </cofactor>
    <text evidence="1">Binds 1 zinc ion.</text>
</comment>
<comment type="subcellular location">
    <subcellularLocation>
        <location evidence="1">Cytoplasm</location>
    </subcellularLocation>
</comment>
<comment type="similarity">
    <text evidence="1">Belongs to the endoribonuclease YbeY family.</text>
</comment>
<proteinExistence type="inferred from homology"/>
<protein>
    <recommendedName>
        <fullName evidence="1">Endoribonuclease YbeY</fullName>
        <ecNumber evidence="1">3.1.-.-</ecNumber>
    </recommendedName>
</protein>
<gene>
    <name evidence="1" type="primary">ybeY</name>
    <name type="ordered locus">PMT9312_0184</name>
</gene>
<keyword id="KW-0963">Cytoplasm</keyword>
<keyword id="KW-0255">Endonuclease</keyword>
<keyword id="KW-0378">Hydrolase</keyword>
<keyword id="KW-0479">Metal-binding</keyword>
<keyword id="KW-0540">Nuclease</keyword>
<keyword id="KW-0690">Ribosome biogenesis</keyword>
<keyword id="KW-0698">rRNA processing</keyword>
<keyword id="KW-0862">Zinc</keyword>
<feature type="chain" id="PRO_0000284270" description="Endoribonuclease YbeY">
    <location>
        <begin position="1"/>
        <end position="179"/>
    </location>
</feature>
<feature type="binding site" evidence="1">
    <location>
        <position position="148"/>
    </location>
    <ligand>
        <name>Zn(2+)</name>
        <dbReference type="ChEBI" id="CHEBI:29105"/>
        <note>catalytic</note>
    </ligand>
</feature>
<feature type="binding site" evidence="1">
    <location>
        <position position="152"/>
    </location>
    <ligand>
        <name>Zn(2+)</name>
        <dbReference type="ChEBI" id="CHEBI:29105"/>
        <note>catalytic</note>
    </ligand>
</feature>
<feature type="binding site" evidence="1">
    <location>
        <position position="158"/>
    </location>
    <ligand>
        <name>Zn(2+)</name>
        <dbReference type="ChEBI" id="CHEBI:29105"/>
        <note>catalytic</note>
    </ligand>
</feature>
<evidence type="ECO:0000255" key="1">
    <source>
        <dbReference type="HAMAP-Rule" id="MF_00009"/>
    </source>
</evidence>
<reference key="1">
    <citation type="journal article" date="2006" name="Science">
        <title>Genomic islands and the ecology and evolution of Prochlorococcus.</title>
        <authorList>
            <person name="Coleman M.L."/>
            <person name="Sullivan M.B."/>
            <person name="Martiny A.C."/>
            <person name="Steglich C."/>
            <person name="Barry K."/>
            <person name="Delong E.F."/>
            <person name="Chisholm S.W."/>
        </authorList>
    </citation>
    <scope>NUCLEOTIDE SEQUENCE [LARGE SCALE GENOMIC DNA]</scope>
    <source>
        <strain>MIT 9312</strain>
    </source>
</reference>
<dbReference type="EC" id="3.1.-.-" evidence="1"/>
<dbReference type="EMBL" id="CP000111">
    <property type="protein sequence ID" value="ABB49246.1"/>
    <property type="molecule type" value="Genomic_DNA"/>
</dbReference>
<dbReference type="RefSeq" id="WP_011375750.1">
    <property type="nucleotide sequence ID" value="NC_007577.1"/>
</dbReference>
<dbReference type="SMR" id="Q31CZ9"/>
<dbReference type="STRING" id="74546.PMT9312_0184"/>
<dbReference type="KEGG" id="pmi:PMT9312_0184"/>
<dbReference type="eggNOG" id="COG0319">
    <property type="taxonomic scope" value="Bacteria"/>
</dbReference>
<dbReference type="HOGENOM" id="CLU_106710_3_0_3"/>
<dbReference type="OrthoDB" id="9807740at2"/>
<dbReference type="Proteomes" id="UP000002715">
    <property type="component" value="Chromosome"/>
</dbReference>
<dbReference type="GO" id="GO:0005737">
    <property type="term" value="C:cytoplasm"/>
    <property type="evidence" value="ECO:0007669"/>
    <property type="project" value="UniProtKB-SubCell"/>
</dbReference>
<dbReference type="GO" id="GO:0004222">
    <property type="term" value="F:metalloendopeptidase activity"/>
    <property type="evidence" value="ECO:0007669"/>
    <property type="project" value="InterPro"/>
</dbReference>
<dbReference type="GO" id="GO:0004521">
    <property type="term" value="F:RNA endonuclease activity"/>
    <property type="evidence" value="ECO:0007669"/>
    <property type="project" value="UniProtKB-UniRule"/>
</dbReference>
<dbReference type="GO" id="GO:0008270">
    <property type="term" value="F:zinc ion binding"/>
    <property type="evidence" value="ECO:0007669"/>
    <property type="project" value="UniProtKB-UniRule"/>
</dbReference>
<dbReference type="GO" id="GO:0006364">
    <property type="term" value="P:rRNA processing"/>
    <property type="evidence" value="ECO:0007669"/>
    <property type="project" value="UniProtKB-UniRule"/>
</dbReference>
<dbReference type="Gene3D" id="3.40.390.30">
    <property type="entry name" value="Metalloproteases ('zincins'), catalytic domain"/>
    <property type="match status" value="1"/>
</dbReference>
<dbReference type="HAMAP" id="MF_00009">
    <property type="entry name" value="Endoribonucl_YbeY"/>
    <property type="match status" value="1"/>
</dbReference>
<dbReference type="InterPro" id="IPR023091">
    <property type="entry name" value="MetalPrtase_cat_dom_sf_prd"/>
</dbReference>
<dbReference type="InterPro" id="IPR002036">
    <property type="entry name" value="YbeY"/>
</dbReference>
<dbReference type="InterPro" id="IPR020549">
    <property type="entry name" value="YbeY_CS"/>
</dbReference>
<dbReference type="NCBIfam" id="TIGR00043">
    <property type="entry name" value="rRNA maturation RNase YbeY"/>
    <property type="match status" value="1"/>
</dbReference>
<dbReference type="PANTHER" id="PTHR46986">
    <property type="entry name" value="ENDORIBONUCLEASE YBEY, CHLOROPLASTIC"/>
    <property type="match status" value="1"/>
</dbReference>
<dbReference type="PANTHER" id="PTHR46986:SF1">
    <property type="entry name" value="ENDORIBONUCLEASE YBEY, CHLOROPLASTIC"/>
    <property type="match status" value="1"/>
</dbReference>
<dbReference type="Pfam" id="PF02130">
    <property type="entry name" value="YbeY"/>
    <property type="match status" value="1"/>
</dbReference>
<dbReference type="SUPFAM" id="SSF55486">
    <property type="entry name" value="Metalloproteases ('zincins'), catalytic domain"/>
    <property type="match status" value="1"/>
</dbReference>
<dbReference type="PROSITE" id="PS01306">
    <property type="entry name" value="UPF0054"/>
    <property type="match status" value="1"/>
</dbReference>